<comment type="function">
    <text evidence="1">Transfers the gamma-phosphate of ATP to the 4'-position of a tetraacyldisaccharide 1-phosphate intermediate (termed DS-1-P) to form tetraacyldisaccharide 1,4'-bis-phosphate (lipid IVA).</text>
</comment>
<comment type="catalytic activity">
    <reaction evidence="1">
        <text>a lipid A disaccharide + ATP = a lipid IVA + ADP + H(+)</text>
        <dbReference type="Rhea" id="RHEA:67840"/>
        <dbReference type="ChEBI" id="CHEBI:15378"/>
        <dbReference type="ChEBI" id="CHEBI:30616"/>
        <dbReference type="ChEBI" id="CHEBI:176343"/>
        <dbReference type="ChEBI" id="CHEBI:176425"/>
        <dbReference type="ChEBI" id="CHEBI:456216"/>
        <dbReference type="EC" id="2.7.1.130"/>
    </reaction>
</comment>
<comment type="pathway">
    <text evidence="1">Glycolipid biosynthesis; lipid IV(A) biosynthesis; lipid IV(A) from (3R)-3-hydroxytetradecanoyl-[acyl-carrier-protein] and UDP-N-acetyl-alpha-D-glucosamine: step 6/6.</text>
</comment>
<comment type="similarity">
    <text evidence="1">Belongs to the LpxK family.</text>
</comment>
<gene>
    <name evidence="1" type="primary">lpxK</name>
    <name type="ordered locus">EFER_1059</name>
</gene>
<evidence type="ECO:0000255" key="1">
    <source>
        <dbReference type="HAMAP-Rule" id="MF_00409"/>
    </source>
</evidence>
<proteinExistence type="inferred from homology"/>
<organism>
    <name type="scientific">Escherichia fergusonii (strain ATCC 35469 / DSM 13698 / CCUG 18766 / IAM 14443 / JCM 21226 / LMG 7866 / NBRC 102419 / NCTC 12128 / CDC 0568-73)</name>
    <dbReference type="NCBI Taxonomy" id="585054"/>
    <lineage>
        <taxon>Bacteria</taxon>
        <taxon>Pseudomonadati</taxon>
        <taxon>Pseudomonadota</taxon>
        <taxon>Gammaproteobacteria</taxon>
        <taxon>Enterobacterales</taxon>
        <taxon>Enterobacteriaceae</taxon>
        <taxon>Escherichia</taxon>
    </lineage>
</organism>
<protein>
    <recommendedName>
        <fullName evidence="1">Tetraacyldisaccharide 4'-kinase</fullName>
        <ecNumber evidence="1">2.7.1.130</ecNumber>
    </recommendedName>
    <alternativeName>
        <fullName evidence="1">Lipid A 4'-kinase</fullName>
    </alternativeName>
</protein>
<keyword id="KW-0067">ATP-binding</keyword>
<keyword id="KW-0418">Kinase</keyword>
<keyword id="KW-0441">Lipid A biosynthesis</keyword>
<keyword id="KW-0444">Lipid biosynthesis</keyword>
<keyword id="KW-0443">Lipid metabolism</keyword>
<keyword id="KW-0547">Nucleotide-binding</keyword>
<keyword id="KW-0808">Transferase</keyword>
<accession>B7LN77</accession>
<feature type="chain" id="PRO_1000123717" description="Tetraacyldisaccharide 4'-kinase">
    <location>
        <begin position="1"/>
        <end position="328"/>
    </location>
</feature>
<feature type="binding site" evidence="1">
    <location>
        <begin position="55"/>
        <end position="62"/>
    </location>
    <ligand>
        <name>ATP</name>
        <dbReference type="ChEBI" id="CHEBI:30616"/>
    </ligand>
</feature>
<dbReference type="EC" id="2.7.1.130" evidence="1"/>
<dbReference type="EMBL" id="CU928158">
    <property type="protein sequence ID" value="CAQ88588.1"/>
    <property type="molecule type" value="Genomic_DNA"/>
</dbReference>
<dbReference type="RefSeq" id="WP_000572825.1">
    <property type="nucleotide sequence ID" value="NC_011740.1"/>
</dbReference>
<dbReference type="SMR" id="B7LN77"/>
<dbReference type="GeneID" id="75057890"/>
<dbReference type="KEGG" id="efe:EFER_1059"/>
<dbReference type="HOGENOM" id="CLU_038816_2_0_6"/>
<dbReference type="OrthoDB" id="9766423at2"/>
<dbReference type="UniPathway" id="UPA00359">
    <property type="reaction ID" value="UER00482"/>
</dbReference>
<dbReference type="Proteomes" id="UP000000745">
    <property type="component" value="Chromosome"/>
</dbReference>
<dbReference type="GO" id="GO:0005886">
    <property type="term" value="C:plasma membrane"/>
    <property type="evidence" value="ECO:0007669"/>
    <property type="project" value="TreeGrafter"/>
</dbReference>
<dbReference type="GO" id="GO:0005524">
    <property type="term" value="F:ATP binding"/>
    <property type="evidence" value="ECO:0007669"/>
    <property type="project" value="UniProtKB-UniRule"/>
</dbReference>
<dbReference type="GO" id="GO:0009029">
    <property type="term" value="F:tetraacyldisaccharide 4'-kinase activity"/>
    <property type="evidence" value="ECO:0007669"/>
    <property type="project" value="UniProtKB-UniRule"/>
</dbReference>
<dbReference type="GO" id="GO:0009245">
    <property type="term" value="P:lipid A biosynthetic process"/>
    <property type="evidence" value="ECO:0007669"/>
    <property type="project" value="UniProtKB-UniRule"/>
</dbReference>
<dbReference type="GO" id="GO:0009244">
    <property type="term" value="P:lipopolysaccharide core region biosynthetic process"/>
    <property type="evidence" value="ECO:0007669"/>
    <property type="project" value="TreeGrafter"/>
</dbReference>
<dbReference type="HAMAP" id="MF_00409">
    <property type="entry name" value="LpxK"/>
    <property type="match status" value="1"/>
</dbReference>
<dbReference type="InterPro" id="IPR003758">
    <property type="entry name" value="LpxK"/>
</dbReference>
<dbReference type="InterPro" id="IPR027417">
    <property type="entry name" value="P-loop_NTPase"/>
</dbReference>
<dbReference type="NCBIfam" id="TIGR00682">
    <property type="entry name" value="lpxK"/>
    <property type="match status" value="1"/>
</dbReference>
<dbReference type="PANTHER" id="PTHR42724">
    <property type="entry name" value="TETRAACYLDISACCHARIDE 4'-KINASE"/>
    <property type="match status" value="1"/>
</dbReference>
<dbReference type="PANTHER" id="PTHR42724:SF1">
    <property type="entry name" value="TETRAACYLDISACCHARIDE 4'-KINASE, MITOCHONDRIAL-RELATED"/>
    <property type="match status" value="1"/>
</dbReference>
<dbReference type="Pfam" id="PF02606">
    <property type="entry name" value="LpxK"/>
    <property type="match status" value="1"/>
</dbReference>
<dbReference type="SUPFAM" id="SSF52540">
    <property type="entry name" value="P-loop containing nucleoside triphosphate hydrolases"/>
    <property type="match status" value="1"/>
</dbReference>
<sequence length="328" mass="35756">MIERIWSGESPLWRLLLPLSWLYGLVSGLIRLCYKLGLKRAWRAPVPVVVVGNLTAGGNGKTPVVIWLVEQLQQRGVRVGVVSRGYGGKAESYPLLLSDDTTTAQAGDEPVLIYQRTGAPVAVSPVRSDAVKAILTQHPDMQIIVTDDGLQHYRLARDVEVVVIDGVRRFGNGWWLPAGPMRERAGRLKTVDTVIVNGGVPRSGEIPMHLAPGQAVNLRTGTRCDIAKLTHVVAMAGIGHPPRFFATLKMCGVNPEKCVPLADHQSLTHSDVCALLNSGQTLVMTEKDAVKCRAFAEDNWWYLPVDARFAGHEPEQLLAKLISLASGE</sequence>
<reference key="1">
    <citation type="journal article" date="2009" name="PLoS Genet.">
        <title>Organised genome dynamics in the Escherichia coli species results in highly diverse adaptive paths.</title>
        <authorList>
            <person name="Touchon M."/>
            <person name="Hoede C."/>
            <person name="Tenaillon O."/>
            <person name="Barbe V."/>
            <person name="Baeriswyl S."/>
            <person name="Bidet P."/>
            <person name="Bingen E."/>
            <person name="Bonacorsi S."/>
            <person name="Bouchier C."/>
            <person name="Bouvet O."/>
            <person name="Calteau A."/>
            <person name="Chiapello H."/>
            <person name="Clermont O."/>
            <person name="Cruveiller S."/>
            <person name="Danchin A."/>
            <person name="Diard M."/>
            <person name="Dossat C."/>
            <person name="Karoui M.E."/>
            <person name="Frapy E."/>
            <person name="Garry L."/>
            <person name="Ghigo J.M."/>
            <person name="Gilles A.M."/>
            <person name="Johnson J."/>
            <person name="Le Bouguenec C."/>
            <person name="Lescat M."/>
            <person name="Mangenot S."/>
            <person name="Martinez-Jehanne V."/>
            <person name="Matic I."/>
            <person name="Nassif X."/>
            <person name="Oztas S."/>
            <person name="Petit M.A."/>
            <person name="Pichon C."/>
            <person name="Rouy Z."/>
            <person name="Ruf C.S."/>
            <person name="Schneider D."/>
            <person name="Tourret J."/>
            <person name="Vacherie B."/>
            <person name="Vallenet D."/>
            <person name="Medigue C."/>
            <person name="Rocha E.P.C."/>
            <person name="Denamur E."/>
        </authorList>
    </citation>
    <scope>NUCLEOTIDE SEQUENCE [LARGE SCALE GENOMIC DNA]</scope>
    <source>
        <strain>ATCC 35469 / DSM 13698 / BCRC 15582 / CCUG 18766 / IAM 14443 / JCM 21226 / LMG 7866 / NBRC 102419 / NCTC 12128 / CDC 0568-73</strain>
    </source>
</reference>
<name>LPXK_ESCF3</name>